<reference key="1">
    <citation type="journal article" date="1995" name="Gene">
        <title>Cloning of a mouse adrenocorticotropin receptor-encoding gene.</title>
        <authorList>
            <person name="Kubo M."/>
            <person name="Ishizuka T."/>
            <person name="Kijima H."/>
            <person name="Kakinuma M."/>
            <person name="Koike T."/>
        </authorList>
    </citation>
    <scope>NUCLEOTIDE SEQUENCE [GENOMIC DNA]</scope>
</reference>
<reference key="2">
    <citation type="journal article" date="1995" name="Biochem. Biophys. Res. Commun.">
        <title>Cloning, characterization and expression of a functional mouse ACTH receptor.</title>
        <authorList>
            <person name="Cammas F.M."/>
            <person name="Kapas S."/>
            <person name="Barker S."/>
            <person name="Clark A.J."/>
        </authorList>
    </citation>
    <scope>NUCLEOTIDE SEQUENCE [GENOMIC DNA]</scope>
</reference>
<reference key="3">
    <citation type="journal article" date="2006" name="Mol. Endocrinol.">
        <title>Adrenocorticotropic hormone-mediated signaling cascades coordinate a cyclic pattern of steroidogenic factor 1-dependent transcriptional activation.</title>
        <authorList>
            <person name="Winnay J.N."/>
            <person name="Hammer G.D."/>
        </authorList>
    </citation>
    <scope>FUNCTION</scope>
</reference>
<reference key="4">
    <citation type="journal article" date="2007" name="Proc. Natl. Acad. Sci. U.S.A.">
        <title>Melanocortin 2 receptor is required for adrenal gland development, steroidogenesis, and neonatal gluconeogenesis.</title>
        <authorList>
            <person name="Chida D."/>
            <person name="Nakagawa S."/>
            <person name="Nagai S."/>
            <person name="Sagara H."/>
            <person name="Katsumata H."/>
            <person name="Imaki T."/>
            <person name="Suzuki H."/>
            <person name="Mitani F."/>
            <person name="Ogishima T."/>
            <person name="Shimizu C."/>
            <person name="Kotaki H."/>
            <person name="Kakuta S."/>
            <person name="Sudo K."/>
            <person name="Koike T."/>
            <person name="Kubo M."/>
            <person name="Iwakura Y."/>
        </authorList>
    </citation>
    <scope>FUNCTION</scope>
    <scope>DISRUPTION PHENOTYPE</scope>
</reference>
<accession>Q64326</accession>
<name>ACTHR_MOUSE</name>
<sequence length="296" mass="33982">MKHIINSYEHTNDTARNNSDCPDVVLPEEIFFTISVIGILENLIVLLAVIKNKNLQSPMYFFICSLAISDMLGSLYKILENILIMFRNMGYLKPRGSFESTADDIIDCMFILSLLGSIFSLSVIAADRYITIFHALQYHSIVTMRRTIITLTIIWMFCTGSGITMVIFSHHIPTVLTFTSLFPLMLVFILCLYIHMFLLARSHARKISTLPRTNMKGAMTLTILLGVFIFCWAPFVLHVLLMTFCPNNPYCVCYMSLFQVNGMLIMCNAVIDPFIYAFRSPELRDAFKRMLFCNRY</sequence>
<feature type="chain" id="PRO_0000069056" description="Adrenocorticotropic hormone receptor">
    <location>
        <begin position="1"/>
        <end position="296"/>
    </location>
</feature>
<feature type="topological domain" description="Extracellular" evidence="1">
    <location>
        <begin position="1"/>
        <end position="23"/>
    </location>
</feature>
<feature type="transmembrane region" description="Helical; Name=1" evidence="1">
    <location>
        <begin position="24"/>
        <end position="49"/>
    </location>
</feature>
<feature type="topological domain" description="Cytoplasmic" evidence="1">
    <location>
        <begin position="50"/>
        <end position="58"/>
    </location>
</feature>
<feature type="transmembrane region" description="Helical; Name=2" evidence="1">
    <location>
        <begin position="59"/>
        <end position="79"/>
    </location>
</feature>
<feature type="topological domain" description="Extracellular" evidence="1">
    <location>
        <begin position="80"/>
        <end position="104"/>
    </location>
</feature>
<feature type="transmembrane region" description="Helical; Name=3" evidence="1">
    <location>
        <begin position="105"/>
        <end position="126"/>
    </location>
</feature>
<feature type="topological domain" description="Cytoplasmic" evidence="1">
    <location>
        <begin position="127"/>
        <end position="147"/>
    </location>
</feature>
<feature type="transmembrane region" description="Helical; Name=4" evidence="1">
    <location>
        <begin position="148"/>
        <end position="168"/>
    </location>
</feature>
<feature type="topological domain" description="Extracellular" evidence="1">
    <location>
        <begin position="169"/>
        <end position="180"/>
    </location>
</feature>
<feature type="transmembrane region" description="Helical; Name=5" evidence="1">
    <location>
        <begin position="181"/>
        <end position="199"/>
    </location>
</feature>
<feature type="topological domain" description="Cytoplasmic" evidence="1">
    <location>
        <begin position="200"/>
        <end position="217"/>
    </location>
</feature>
<feature type="transmembrane region" description="Helical; Name=6" evidence="1">
    <location>
        <begin position="218"/>
        <end position="244"/>
    </location>
</feature>
<feature type="topological domain" description="Extracellular" evidence="1">
    <location>
        <begin position="245"/>
        <end position="256"/>
    </location>
</feature>
<feature type="transmembrane region" description="Helical; Name=7" evidence="1">
    <location>
        <begin position="257"/>
        <end position="278"/>
    </location>
</feature>
<feature type="topological domain" description="Cytoplasmic" evidence="1">
    <location>
        <begin position="279"/>
        <end position="296"/>
    </location>
</feature>
<feature type="lipid moiety-binding region" description="S-palmitoyl cysteine" evidence="3">
    <location>
        <position position="293"/>
    </location>
</feature>
<feature type="glycosylation site" description="N-linked (GlcNAc...) asparagine" evidence="3">
    <location>
        <position position="12"/>
    </location>
</feature>
<feature type="glycosylation site" description="N-linked (GlcNAc...) asparagine" evidence="3">
    <location>
        <position position="17"/>
    </location>
</feature>
<feature type="disulfide bond" evidence="2">
    <location>
        <begin position="21"/>
        <end position="253"/>
    </location>
</feature>
<feature type="disulfide bond" evidence="2">
    <location>
        <begin position="245"/>
        <end position="251"/>
    </location>
</feature>
<protein>
    <recommendedName>
        <fullName>Adrenocorticotropic hormone receptor</fullName>
        <shortName>ACTH receptor</shortName>
        <shortName>ACTH-R</shortName>
    </recommendedName>
    <alternativeName>
        <fullName>Adrenocorticotropin receptor</fullName>
    </alternativeName>
    <alternativeName>
        <fullName>Melanocortin receptor 2</fullName>
        <shortName>MC2-R</shortName>
    </alternativeName>
</protein>
<organism>
    <name type="scientific">Mus musculus</name>
    <name type="common">Mouse</name>
    <dbReference type="NCBI Taxonomy" id="10090"/>
    <lineage>
        <taxon>Eukaryota</taxon>
        <taxon>Metazoa</taxon>
        <taxon>Chordata</taxon>
        <taxon>Craniata</taxon>
        <taxon>Vertebrata</taxon>
        <taxon>Euteleostomi</taxon>
        <taxon>Mammalia</taxon>
        <taxon>Eutheria</taxon>
        <taxon>Euarchontoglires</taxon>
        <taxon>Glires</taxon>
        <taxon>Rodentia</taxon>
        <taxon>Myomorpha</taxon>
        <taxon>Muroidea</taxon>
        <taxon>Muridae</taxon>
        <taxon>Murinae</taxon>
        <taxon>Mus</taxon>
        <taxon>Mus</taxon>
    </lineage>
</organism>
<dbReference type="EMBL" id="D31952">
    <property type="protein sequence ID" value="BAA06722.1"/>
    <property type="molecule type" value="Genomic_DNA"/>
</dbReference>
<dbReference type="EMBL" id="S78985">
    <property type="protein sequence ID" value="AAB34919.1"/>
    <property type="molecule type" value="Genomic_DNA"/>
</dbReference>
<dbReference type="CCDS" id="CCDS29328.1"/>
<dbReference type="PIR" id="JC4046">
    <property type="entry name" value="JC4046"/>
</dbReference>
<dbReference type="RefSeq" id="NP_001258645.1">
    <property type="nucleotide sequence ID" value="NM_001271716.1"/>
</dbReference>
<dbReference type="RefSeq" id="NP_001258646.1">
    <property type="nucleotide sequence ID" value="NM_001271717.1"/>
</dbReference>
<dbReference type="RefSeq" id="NP_001288301.1">
    <property type="nucleotide sequence ID" value="NM_001301372.1"/>
</dbReference>
<dbReference type="RefSeq" id="NP_032586.1">
    <property type="nucleotide sequence ID" value="NM_008560.3"/>
</dbReference>
<dbReference type="SMR" id="Q64326"/>
<dbReference type="CORUM" id="Q64326"/>
<dbReference type="FunCoup" id="Q64326">
    <property type="interactions" value="929"/>
</dbReference>
<dbReference type="STRING" id="10090.ENSMUSP00000058691"/>
<dbReference type="BindingDB" id="Q64326"/>
<dbReference type="ChEMBL" id="CHEMBL2279"/>
<dbReference type="DrugCentral" id="Q64326"/>
<dbReference type="GuidetoPHARMACOLOGY" id="283"/>
<dbReference type="GlyCosmos" id="Q64326">
    <property type="glycosylation" value="2 sites, No reported glycans"/>
</dbReference>
<dbReference type="GlyGen" id="Q64326">
    <property type="glycosylation" value="2 sites"/>
</dbReference>
<dbReference type="iPTMnet" id="Q64326"/>
<dbReference type="PhosphoSitePlus" id="Q64326"/>
<dbReference type="PaxDb" id="10090-ENSMUSP00000058691"/>
<dbReference type="Antibodypedia" id="21964">
    <property type="antibodies" value="284 antibodies from 32 providers"/>
</dbReference>
<dbReference type="DNASU" id="17200"/>
<dbReference type="Ensembl" id="ENSMUST00000052347.8">
    <property type="protein sequence ID" value="ENSMUSP00000058691.7"/>
    <property type="gene ID" value="ENSMUSG00000045569.8"/>
</dbReference>
<dbReference type="GeneID" id="17200"/>
<dbReference type="KEGG" id="mmu:17200"/>
<dbReference type="UCSC" id="uc008fnm.2">
    <property type="organism name" value="mouse"/>
</dbReference>
<dbReference type="AGR" id="MGI:96928"/>
<dbReference type="CTD" id="4158"/>
<dbReference type="MGI" id="MGI:96928">
    <property type="gene designation" value="Mc2r"/>
</dbReference>
<dbReference type="VEuPathDB" id="HostDB:ENSMUSG00000045569"/>
<dbReference type="eggNOG" id="KOG3656">
    <property type="taxonomic scope" value="Eukaryota"/>
</dbReference>
<dbReference type="GeneTree" id="ENSGT01120000271819"/>
<dbReference type="HOGENOM" id="CLU_009579_13_0_1"/>
<dbReference type="InParanoid" id="Q64326"/>
<dbReference type="OMA" id="LIKHPGQ"/>
<dbReference type="OrthoDB" id="9894375at2759"/>
<dbReference type="PhylomeDB" id="Q64326"/>
<dbReference type="TreeFam" id="TF332646"/>
<dbReference type="Reactome" id="R-MMU-375276">
    <property type="pathway name" value="Peptide ligand-binding receptors"/>
</dbReference>
<dbReference type="Reactome" id="R-MMU-418555">
    <property type="pathway name" value="G alpha (s) signalling events"/>
</dbReference>
<dbReference type="BioGRID-ORCS" id="17200">
    <property type="hits" value="1 hit in 75 CRISPR screens"/>
</dbReference>
<dbReference type="PRO" id="PR:Q64326"/>
<dbReference type="Proteomes" id="UP000000589">
    <property type="component" value="Chromosome 18"/>
</dbReference>
<dbReference type="RNAct" id="Q64326">
    <property type="molecule type" value="protein"/>
</dbReference>
<dbReference type="Bgee" id="ENSMUSG00000045569">
    <property type="expression patterns" value="Expressed in adrenal gland and 31 other cell types or tissues"/>
</dbReference>
<dbReference type="ExpressionAtlas" id="Q64326">
    <property type="expression patterns" value="baseline and differential"/>
</dbReference>
<dbReference type="GO" id="GO:0005886">
    <property type="term" value="C:plasma membrane"/>
    <property type="evidence" value="ECO:0007669"/>
    <property type="project" value="UniProtKB-SubCell"/>
</dbReference>
<dbReference type="GO" id="GO:0004978">
    <property type="term" value="F:corticotropin receptor activity"/>
    <property type="evidence" value="ECO:0007669"/>
    <property type="project" value="InterPro"/>
</dbReference>
<dbReference type="GO" id="GO:0007189">
    <property type="term" value="P:adenylate cyclase-activating G protein-coupled receptor signaling pathway"/>
    <property type="evidence" value="ECO:0007669"/>
    <property type="project" value="Ensembl"/>
</dbReference>
<dbReference type="GO" id="GO:0001890">
    <property type="term" value="P:placenta development"/>
    <property type="evidence" value="ECO:0007669"/>
    <property type="project" value="Ensembl"/>
</dbReference>
<dbReference type="CDD" id="cd15350">
    <property type="entry name" value="7tmA_MC2R_ACTH_R"/>
    <property type="match status" value="1"/>
</dbReference>
<dbReference type="FunFam" id="1.20.1070.10:FF:000306">
    <property type="entry name" value="Adrenocorticotropic hormone receptor"/>
    <property type="match status" value="1"/>
</dbReference>
<dbReference type="Gene3D" id="1.20.1070.10">
    <property type="entry name" value="Rhodopsin 7-helix transmembrane proteins"/>
    <property type="match status" value="1"/>
</dbReference>
<dbReference type="InterPro" id="IPR001168">
    <property type="entry name" value="ACTH_rcpt"/>
</dbReference>
<dbReference type="InterPro" id="IPR000276">
    <property type="entry name" value="GPCR_Rhodpsn"/>
</dbReference>
<dbReference type="InterPro" id="IPR017452">
    <property type="entry name" value="GPCR_Rhodpsn_7TM"/>
</dbReference>
<dbReference type="InterPro" id="IPR001671">
    <property type="entry name" value="Melcrt_ACTH_rcpt"/>
</dbReference>
<dbReference type="PANTHER" id="PTHR22750">
    <property type="entry name" value="G-PROTEIN COUPLED RECEPTOR"/>
    <property type="match status" value="1"/>
</dbReference>
<dbReference type="Pfam" id="PF00001">
    <property type="entry name" value="7tm_1"/>
    <property type="match status" value="2"/>
</dbReference>
<dbReference type="PRINTS" id="PR00520">
    <property type="entry name" value="ACTROPHINR"/>
</dbReference>
<dbReference type="PRINTS" id="PR00237">
    <property type="entry name" value="GPCRRHODOPSN"/>
</dbReference>
<dbReference type="PRINTS" id="PR00534">
    <property type="entry name" value="MCRFAMILY"/>
</dbReference>
<dbReference type="SMART" id="SM01381">
    <property type="entry name" value="7TM_GPCR_Srsx"/>
    <property type="match status" value="1"/>
</dbReference>
<dbReference type="SUPFAM" id="SSF81321">
    <property type="entry name" value="Family A G protein-coupled receptor-like"/>
    <property type="match status" value="1"/>
</dbReference>
<dbReference type="PROSITE" id="PS00237">
    <property type="entry name" value="G_PROTEIN_RECEP_F1_1"/>
    <property type="match status" value="1"/>
</dbReference>
<dbReference type="PROSITE" id="PS50262">
    <property type="entry name" value="G_PROTEIN_RECEP_F1_2"/>
    <property type="match status" value="1"/>
</dbReference>
<proteinExistence type="inferred from homology"/>
<gene>
    <name type="primary">Mc2r</name>
    <name type="synonym">Acthr</name>
</gene>
<comment type="function">
    <text evidence="2 5 6">Hormone receptor primarily expressed in adrenal cortex that plays a key role in regulating adrenocortical function (By similarity). Upon corticotropin (ACTH) binding, facilitates the release of adrenal glucocorticoids, including cortisol and corticosterone. In addition, MC2R is required for fetal and neonatal adrenal gland development (PubMed:16109736). Mechanistically, activates adenylate cyclase (cAMP), the MAPK cascade as well as the cAMP-dependent protein kinase A pathway leading to steroidogenic factor 1/NR5A1-mediated transcriptional activation (PubMed:17989225).</text>
</comment>
<comment type="subunit">
    <text evidence="2">Homodimer. Interacts with corticotropin (ACTH). Interacts with MRAP; this interaction targets MC2R to the plasma membrane. Interacts with MRAP2; competing with MRAP for binding to MC2R and impairing the binding of corticotropin (ACTH).</text>
</comment>
<comment type="subcellular location">
    <subcellularLocation>
        <location evidence="2">Cell membrane</location>
        <topology evidence="2">Multi-pass membrane protein</topology>
    </subcellularLocation>
</comment>
<comment type="PTM">
    <text evidence="2">Ubiquitinated by MGRN1 that may be involved in post-endocytic trafficking and/or degradation of internalized receptor.</text>
</comment>
<comment type="disruption phenotype">
    <text evidence="6">Most of the MC2R knockout mice die shortly after birth. Adrenal glands are considerably reduced in size compared with those of their WT siblings and they produce aldosterone at reduced levels.</text>
</comment>
<comment type="similarity">
    <text evidence="4">Belongs to the G-protein coupled receptor 1 family.</text>
</comment>
<evidence type="ECO:0000250" key="1"/>
<evidence type="ECO:0000250" key="2">
    <source>
        <dbReference type="UniProtKB" id="Q01718"/>
    </source>
</evidence>
<evidence type="ECO:0000255" key="3"/>
<evidence type="ECO:0000255" key="4">
    <source>
        <dbReference type="PROSITE-ProRule" id="PRU00521"/>
    </source>
</evidence>
<evidence type="ECO:0000269" key="5">
    <source>
    </source>
</evidence>
<evidence type="ECO:0000269" key="6">
    <source>
    </source>
</evidence>
<keyword id="KW-1003">Cell membrane</keyword>
<keyword id="KW-1015">Disulfide bond</keyword>
<keyword id="KW-0297">G-protein coupled receptor</keyword>
<keyword id="KW-0325">Glycoprotein</keyword>
<keyword id="KW-0449">Lipoprotein</keyword>
<keyword id="KW-0472">Membrane</keyword>
<keyword id="KW-0564">Palmitate</keyword>
<keyword id="KW-0675">Receptor</keyword>
<keyword id="KW-1185">Reference proteome</keyword>
<keyword id="KW-0807">Transducer</keyword>
<keyword id="KW-0812">Transmembrane</keyword>
<keyword id="KW-1133">Transmembrane helix</keyword>
<keyword id="KW-0832">Ubl conjugation</keyword>